<feature type="chain" id="PRO_1000093631" description="DNA mismatch repair protein MutS">
    <location>
        <begin position="1"/>
        <end position="857"/>
    </location>
</feature>
<feature type="binding site" evidence="1">
    <location>
        <begin position="608"/>
        <end position="615"/>
    </location>
    <ligand>
        <name>ATP</name>
        <dbReference type="ChEBI" id="CHEBI:30616"/>
    </ligand>
</feature>
<name>MUTS_LACCB</name>
<comment type="function">
    <text evidence="1">This protein is involved in the repair of mismatches in DNA. It is possible that it carries out the mismatch recognition step. This protein has a weak ATPase activity.</text>
</comment>
<comment type="similarity">
    <text evidence="1">Belongs to the DNA mismatch repair MutS family.</text>
</comment>
<protein>
    <recommendedName>
        <fullName evidence="1">DNA mismatch repair protein MutS</fullName>
    </recommendedName>
</protein>
<accession>B3W9W4</accession>
<keyword id="KW-0067">ATP-binding</keyword>
<keyword id="KW-0227">DNA damage</keyword>
<keyword id="KW-0234">DNA repair</keyword>
<keyword id="KW-0238">DNA-binding</keyword>
<keyword id="KW-0547">Nucleotide-binding</keyword>
<sequence>MPQKTSETPMMQQYNEIKAQYPDAFLFYRIGDFYELFNDDAIKGAQLLELTLTARNKSADDPIPMAGVPHHAVQSYVDILIDHGYKVAICEQMEDPKKAVGMVKRAVIQLVTPGTNVDIKAGAAKSNNYITAVMPHAAGYAFAYADVSTGELKVTDLKSKFALQNELSALATKEIVVPEELTDDDAGMLKQGERLLSVQPDAEPTSEGSYVSQELTDPAEAAVVQMLMAYLLNTQKRSLAHIQKAVAYQPSAYLEMDQDARSNLDILQNSRTGRKGDTLLSLLDSTKTAMGGRLLKQWLDRPLLDIDAISVRQNQVQDLLDHFFERSELQERLTKVYDLERLAGRVAFGTVNGRDLIQLQTSLDQIPAIQDVLGKLDDGSFKALRSKMDPVSDVAGLIRRAIEPEPPISVTDGGLILRGYNQKLDSYRDAMKNSKQWIAELEASERKATGIHTLKIRYNKVFGYFIEVTKSNLDKIPEGRYERKQTLTNAERFITPELKEKETLILEAQESSTALEYDLFQDIRDKVKAQIKRLQALAAQISSLDVLQSFATVAENSHYVRPTMHAGTHDINVKGGRHPVVEHVLGRDSYIPNDVIMNHDTDMLLITGPNMSGKSTYMRQLALIVIMAQAGSFVPADVADLPIFDQIFTRIGAADDLANGESTFMVEMLEANAALSHATASSLILFDEIGRGTATYDGMALAQAIIEFLHDHVHAKTLFSTHYHELTSLSDSLAKLKNVHVGAVEEHGNLVFLHKMMPGPADKSYGIHVAKLAGLPADLLARADTILKQLEADAPNKTAPAPAPQVEEQQLSLFEEPKPTPKNSPILTKLAKFDLMAATPMDAMNFIFDLQKHLKKK</sequence>
<dbReference type="EMBL" id="FM177140">
    <property type="protein sequence ID" value="CAQ67483.1"/>
    <property type="molecule type" value="Genomic_DNA"/>
</dbReference>
<dbReference type="SMR" id="B3W9W4"/>
<dbReference type="KEGG" id="lcb:LCABL_24170"/>
<dbReference type="HOGENOM" id="CLU_002472_4_0_9"/>
<dbReference type="GO" id="GO:0005829">
    <property type="term" value="C:cytosol"/>
    <property type="evidence" value="ECO:0007669"/>
    <property type="project" value="TreeGrafter"/>
</dbReference>
<dbReference type="GO" id="GO:0005524">
    <property type="term" value="F:ATP binding"/>
    <property type="evidence" value="ECO:0007669"/>
    <property type="project" value="UniProtKB-UniRule"/>
</dbReference>
<dbReference type="GO" id="GO:0140664">
    <property type="term" value="F:ATP-dependent DNA damage sensor activity"/>
    <property type="evidence" value="ECO:0007669"/>
    <property type="project" value="InterPro"/>
</dbReference>
<dbReference type="GO" id="GO:0003684">
    <property type="term" value="F:damaged DNA binding"/>
    <property type="evidence" value="ECO:0007669"/>
    <property type="project" value="UniProtKB-UniRule"/>
</dbReference>
<dbReference type="GO" id="GO:0030983">
    <property type="term" value="F:mismatched DNA binding"/>
    <property type="evidence" value="ECO:0007669"/>
    <property type="project" value="InterPro"/>
</dbReference>
<dbReference type="GO" id="GO:0006298">
    <property type="term" value="P:mismatch repair"/>
    <property type="evidence" value="ECO:0007669"/>
    <property type="project" value="UniProtKB-UniRule"/>
</dbReference>
<dbReference type="CDD" id="cd03284">
    <property type="entry name" value="ABC_MutS1"/>
    <property type="match status" value="1"/>
</dbReference>
<dbReference type="FunFam" id="1.10.1420.10:FF:000007">
    <property type="entry name" value="DNA mismatch repair protein MutS"/>
    <property type="match status" value="1"/>
</dbReference>
<dbReference type="FunFam" id="3.40.1170.10:FF:000001">
    <property type="entry name" value="DNA mismatch repair protein MutS"/>
    <property type="match status" value="1"/>
</dbReference>
<dbReference type="FunFam" id="3.40.50.300:FF:000896">
    <property type="entry name" value="DNA mismatch repair protein MutS"/>
    <property type="match status" value="1"/>
</dbReference>
<dbReference type="Gene3D" id="1.10.1420.10">
    <property type="match status" value="2"/>
</dbReference>
<dbReference type="Gene3D" id="3.40.1170.10">
    <property type="entry name" value="DNA repair protein MutS, domain I"/>
    <property type="match status" value="1"/>
</dbReference>
<dbReference type="Gene3D" id="3.30.420.110">
    <property type="entry name" value="MutS, connector domain"/>
    <property type="match status" value="1"/>
</dbReference>
<dbReference type="Gene3D" id="3.40.50.300">
    <property type="entry name" value="P-loop containing nucleotide triphosphate hydrolases"/>
    <property type="match status" value="1"/>
</dbReference>
<dbReference type="HAMAP" id="MF_00096">
    <property type="entry name" value="MutS"/>
    <property type="match status" value="1"/>
</dbReference>
<dbReference type="InterPro" id="IPR005748">
    <property type="entry name" value="DNA_mismatch_repair_MutS"/>
</dbReference>
<dbReference type="InterPro" id="IPR007695">
    <property type="entry name" value="DNA_mismatch_repair_MutS-lik_N"/>
</dbReference>
<dbReference type="InterPro" id="IPR017261">
    <property type="entry name" value="DNA_mismatch_repair_MutS/MSH"/>
</dbReference>
<dbReference type="InterPro" id="IPR000432">
    <property type="entry name" value="DNA_mismatch_repair_MutS_C"/>
</dbReference>
<dbReference type="InterPro" id="IPR007861">
    <property type="entry name" value="DNA_mismatch_repair_MutS_clamp"/>
</dbReference>
<dbReference type="InterPro" id="IPR007696">
    <property type="entry name" value="DNA_mismatch_repair_MutS_core"/>
</dbReference>
<dbReference type="InterPro" id="IPR016151">
    <property type="entry name" value="DNA_mismatch_repair_MutS_N"/>
</dbReference>
<dbReference type="InterPro" id="IPR036187">
    <property type="entry name" value="DNA_mismatch_repair_MutS_sf"/>
</dbReference>
<dbReference type="InterPro" id="IPR007860">
    <property type="entry name" value="DNA_mmatch_repair_MutS_con_dom"/>
</dbReference>
<dbReference type="InterPro" id="IPR045076">
    <property type="entry name" value="MutS"/>
</dbReference>
<dbReference type="InterPro" id="IPR036678">
    <property type="entry name" value="MutS_con_dom_sf"/>
</dbReference>
<dbReference type="InterPro" id="IPR027417">
    <property type="entry name" value="P-loop_NTPase"/>
</dbReference>
<dbReference type="NCBIfam" id="TIGR01070">
    <property type="entry name" value="mutS1"/>
    <property type="match status" value="1"/>
</dbReference>
<dbReference type="NCBIfam" id="NF003810">
    <property type="entry name" value="PRK05399.1"/>
    <property type="match status" value="1"/>
</dbReference>
<dbReference type="PANTHER" id="PTHR11361:SF34">
    <property type="entry name" value="DNA MISMATCH REPAIR PROTEIN MSH1, MITOCHONDRIAL"/>
    <property type="match status" value="1"/>
</dbReference>
<dbReference type="PANTHER" id="PTHR11361">
    <property type="entry name" value="DNA MISMATCH REPAIR PROTEIN MUTS FAMILY MEMBER"/>
    <property type="match status" value="1"/>
</dbReference>
<dbReference type="Pfam" id="PF01624">
    <property type="entry name" value="MutS_I"/>
    <property type="match status" value="1"/>
</dbReference>
<dbReference type="Pfam" id="PF05188">
    <property type="entry name" value="MutS_II"/>
    <property type="match status" value="1"/>
</dbReference>
<dbReference type="Pfam" id="PF05192">
    <property type="entry name" value="MutS_III"/>
    <property type="match status" value="1"/>
</dbReference>
<dbReference type="Pfam" id="PF05190">
    <property type="entry name" value="MutS_IV"/>
    <property type="match status" value="1"/>
</dbReference>
<dbReference type="Pfam" id="PF00488">
    <property type="entry name" value="MutS_V"/>
    <property type="match status" value="1"/>
</dbReference>
<dbReference type="PIRSF" id="PIRSF037677">
    <property type="entry name" value="DNA_mis_repair_Msh6"/>
    <property type="match status" value="1"/>
</dbReference>
<dbReference type="SMART" id="SM00534">
    <property type="entry name" value="MUTSac"/>
    <property type="match status" value="1"/>
</dbReference>
<dbReference type="SMART" id="SM00533">
    <property type="entry name" value="MUTSd"/>
    <property type="match status" value="1"/>
</dbReference>
<dbReference type="SUPFAM" id="SSF55271">
    <property type="entry name" value="DNA repair protein MutS, domain I"/>
    <property type="match status" value="1"/>
</dbReference>
<dbReference type="SUPFAM" id="SSF53150">
    <property type="entry name" value="DNA repair protein MutS, domain II"/>
    <property type="match status" value="1"/>
</dbReference>
<dbReference type="SUPFAM" id="SSF48334">
    <property type="entry name" value="DNA repair protein MutS, domain III"/>
    <property type="match status" value="1"/>
</dbReference>
<dbReference type="SUPFAM" id="SSF52540">
    <property type="entry name" value="P-loop containing nucleoside triphosphate hydrolases"/>
    <property type="match status" value="1"/>
</dbReference>
<dbReference type="PROSITE" id="PS00486">
    <property type="entry name" value="DNA_MISMATCH_REPAIR_2"/>
    <property type="match status" value="1"/>
</dbReference>
<proteinExistence type="inferred from homology"/>
<evidence type="ECO:0000255" key="1">
    <source>
        <dbReference type="HAMAP-Rule" id="MF_00096"/>
    </source>
</evidence>
<reference key="1">
    <citation type="submission" date="2008-06" db="EMBL/GenBank/DDBJ databases">
        <title>Lactobacillus casei BL23 complete genome sequence.</title>
        <authorList>
            <person name="Maze A."/>
            <person name="Boel G."/>
            <person name="Bourand A."/>
            <person name="Loux V."/>
            <person name="Gibrat J.F."/>
            <person name="Zuniga M."/>
            <person name="Hartke A."/>
            <person name="Deutscher J."/>
        </authorList>
    </citation>
    <scope>NUCLEOTIDE SEQUENCE [LARGE SCALE GENOMIC DNA]</scope>
    <source>
        <strain>BL23</strain>
    </source>
</reference>
<gene>
    <name evidence="1" type="primary">mutS</name>
    <name type="ordered locus">LCABL_24170</name>
</gene>
<organism>
    <name type="scientific">Lacticaseibacillus casei (strain BL23)</name>
    <name type="common">Lactobacillus casei</name>
    <dbReference type="NCBI Taxonomy" id="543734"/>
    <lineage>
        <taxon>Bacteria</taxon>
        <taxon>Bacillati</taxon>
        <taxon>Bacillota</taxon>
        <taxon>Bacilli</taxon>
        <taxon>Lactobacillales</taxon>
        <taxon>Lactobacillaceae</taxon>
        <taxon>Lacticaseibacillus</taxon>
    </lineage>
</organism>